<organism>
    <name type="scientific">Olivierus martensii</name>
    <name type="common">Manchurian scorpion</name>
    <name type="synonym">Mesobuthus martensii</name>
    <dbReference type="NCBI Taxonomy" id="34649"/>
    <lineage>
        <taxon>Eukaryota</taxon>
        <taxon>Metazoa</taxon>
        <taxon>Ecdysozoa</taxon>
        <taxon>Arthropoda</taxon>
        <taxon>Chelicerata</taxon>
        <taxon>Arachnida</taxon>
        <taxon>Scorpiones</taxon>
        <taxon>Buthida</taxon>
        <taxon>Buthoidea</taxon>
        <taxon>Buthidae</taxon>
        <taxon>Olivierus</taxon>
    </lineage>
</organism>
<accession>P0DV30</accession>
<protein>
    <recommendedName>
        <fullName evidence="2">Sodium channel neurotoxin BmK NT2</fullName>
    </recommendedName>
    <alternativeName>
        <fullName evidence="2">Alpha-scorpion toxin</fullName>
    </alternativeName>
</protein>
<evidence type="ECO:0000269" key="1">
    <source>
    </source>
</evidence>
<evidence type="ECO:0000303" key="2">
    <source>
    </source>
</evidence>
<evidence type="ECO:0000305" key="3"/>
<evidence type="ECO:0000305" key="4">
    <source>
    </source>
</evidence>
<feature type="chain" id="PRO_0000454750" description="Sodium channel neurotoxin BmK NT2" evidence="4">
    <location>
        <begin position="1"/>
        <end position="32" status="greater than"/>
    </location>
</feature>
<feature type="domain" description="LCN-type CS-alpha/beta" evidence="3">
    <location>
        <begin position="2"/>
        <end position="32" status="greater than"/>
    </location>
</feature>
<feature type="disulfide bond" evidence="3">
    <location>
        <begin position="12"/>
        <end status="unknown"/>
    </location>
</feature>
<feature type="disulfide bond" evidence="3">
    <location>
        <begin position="16"/>
        <end status="unknown"/>
    </location>
</feature>
<feature type="disulfide bond" evidence="3">
    <location>
        <begin position="22"/>
        <end status="unknown"/>
    </location>
</feature>
<feature type="disulfide bond" evidence="3">
    <location>
        <begin position="26"/>
        <end status="unknown"/>
    </location>
</feature>
<feature type="disulfide bond" evidence="3">
    <location>
        <begin position="28"/>
        <end status="unknown"/>
    </location>
</feature>
<feature type="non-terminal residue" evidence="3">
    <location>
        <position position="32"/>
    </location>
</feature>
<sequence>VRDAYIAKPENCVYHCAGNEGCNNLCTCNGAT</sequence>
<proteinExistence type="evidence at protein level"/>
<comment type="function">
    <text evidence="1">Alpha toxins bind voltage-independently at site-3 of sodium channels (Nav) and inhibit the inactivation of the activated channels, thereby blocking neuronal transmission. This toxin dose-dependently delays inactivation of voltage-gated sodium channels (Nav) (EC(50)=0.91 uM), and shifts the steady-state activation and inactivation to hyperpolarized direction. In addition, it dose-dependently alters calcium dynamics and increases phosphorylation of MAP kinases 1/3 (MAPK1/MAPK3) and cAMP-response element binding (CREB) proteins in neocortical neurons. This effect is eliminated by tetrodotoxin, a Nav blocker.</text>
</comment>
<comment type="subcellular location">
    <subcellularLocation>
        <location evidence="1">Secreted</location>
    </subcellularLocation>
</comment>
<comment type="tissue specificity">
    <text evidence="4">Expressed by the venom gland.</text>
</comment>
<comment type="domain">
    <text evidence="3">Has the structural arrangement of an alpha-helix connected to antiparallel beta-sheets by disulfide bonds (CS-alpha/beta).</text>
</comment>
<comment type="mass spectrometry"/>
<comment type="similarity">
    <text evidence="3">Belongs to the long (4 C-C) scorpion toxin superfamily. Sodium channel inhibitor family. Alpha subfamily.</text>
</comment>
<dbReference type="SMR" id="P0DV30"/>
<dbReference type="GO" id="GO:0005576">
    <property type="term" value="C:extracellular region"/>
    <property type="evidence" value="ECO:0007669"/>
    <property type="project" value="UniProtKB-SubCell"/>
</dbReference>
<dbReference type="GO" id="GO:0019871">
    <property type="term" value="F:sodium channel inhibitor activity"/>
    <property type="evidence" value="ECO:0007669"/>
    <property type="project" value="InterPro"/>
</dbReference>
<dbReference type="GO" id="GO:0090729">
    <property type="term" value="F:toxin activity"/>
    <property type="evidence" value="ECO:0007669"/>
    <property type="project" value="UniProtKB-KW"/>
</dbReference>
<dbReference type="Gene3D" id="3.30.30.10">
    <property type="entry name" value="Knottin, scorpion toxin-like"/>
    <property type="match status" value="1"/>
</dbReference>
<dbReference type="InterPro" id="IPR044062">
    <property type="entry name" value="LCN-type_CS_alpha_beta_dom"/>
</dbReference>
<dbReference type="InterPro" id="IPR036574">
    <property type="entry name" value="Scorpion_toxin-like_sf"/>
</dbReference>
<dbReference type="InterPro" id="IPR002061">
    <property type="entry name" value="Scorpion_toxinL/defensin"/>
</dbReference>
<dbReference type="Pfam" id="PF00537">
    <property type="entry name" value="Toxin_3"/>
    <property type="match status" value="1"/>
</dbReference>
<dbReference type="SUPFAM" id="SSF57095">
    <property type="entry name" value="Scorpion toxin-like"/>
    <property type="match status" value="1"/>
</dbReference>
<dbReference type="PROSITE" id="PS51863">
    <property type="entry name" value="LCN_CSAB"/>
    <property type="match status" value="1"/>
</dbReference>
<keyword id="KW-0903">Direct protein sequencing</keyword>
<keyword id="KW-1015">Disulfide bond</keyword>
<keyword id="KW-0872">Ion channel impairing toxin</keyword>
<keyword id="KW-0528">Neurotoxin</keyword>
<keyword id="KW-0964">Secreted</keyword>
<keyword id="KW-0800">Toxin</keyword>
<keyword id="KW-0738">Voltage-gated sodium channel impairing toxin</keyword>
<reference key="1">
    <citation type="journal article" date="2017" name="Int. J. Biol. Macromol.">
        <title>Activation of sodium channel by a novel alpha-scorpion toxin, BmK NT2, stimulates ERK1/2 and CERB phosphorylation through a Ca2+ dependent pathway in neocortical neurons.</title>
        <authorList>
            <person name="Zou X."/>
            <person name="Wu Y."/>
            <person name="Chen J."/>
            <person name="Zhao F."/>
            <person name="Zhang F."/>
            <person name="Yu B."/>
            <person name="Cao Z."/>
        </authorList>
    </citation>
    <scope>PROTEIN SEQUENCE</scope>
    <scope>FUNCTION</scope>
    <scope>SUBCELLULAR LOCATION</scope>
    <scope>MASS SPECTROMETRY</scope>
    <source>
        <tissue>Venom</tissue>
    </source>
</reference>
<name>SCXT2_OLIMR</name>